<evidence type="ECO:0000255" key="1">
    <source>
        <dbReference type="HAMAP-Rule" id="MF_01232"/>
    </source>
</evidence>
<evidence type="ECO:0000256" key="2">
    <source>
        <dbReference type="SAM" id="MobiDB-lite"/>
    </source>
</evidence>
<comment type="similarity">
    <text evidence="1">Belongs to the UPF0229 family.</text>
</comment>
<sequence length="427" mass="49450">MTWFIDRRLNGKNKSMVNRQRFLRRYKAQIKQSISEAINKRSVTDVDSGESVSIPTEDISEPMFHQGRGGLRHRVHPGNDHFVQNDRIERPQGGGGGSGSGQGQASQDGEGQDEFVFQISKDEYLDLLFEDLALPNLKQNQQRQLTEYKTHRAGYTANGVPANISVVRSLQNSLARRTAMTAGKRRELHALEENLAIISNSEPAQLLEEERLRKEIAELRAKIERVPFIDTFDLRYKNYEKRPDPSSQAVMFCLMDVSGSMDQSTKDMAKRFYILLYLFLSRTYKNVEVVYIRHHTQAKEVDEHEFFYSQETGGTIVSSALKLMDEVVKERYNPAQWNIYAAQASDGDNWADDSPLCHEILAKKILPVVRYYSYIEITRRAHQTLWREYEHLQSTFDNFAMQHIRDQDDIYPVFRELFHKQNATAKD</sequence>
<reference key="1">
    <citation type="journal article" date="2009" name="PLoS Genet.">
        <title>Organised genome dynamics in the Escherichia coli species results in highly diverse adaptive paths.</title>
        <authorList>
            <person name="Touchon M."/>
            <person name="Hoede C."/>
            <person name="Tenaillon O."/>
            <person name="Barbe V."/>
            <person name="Baeriswyl S."/>
            <person name="Bidet P."/>
            <person name="Bingen E."/>
            <person name="Bonacorsi S."/>
            <person name="Bouchier C."/>
            <person name="Bouvet O."/>
            <person name="Calteau A."/>
            <person name="Chiapello H."/>
            <person name="Clermont O."/>
            <person name="Cruveiller S."/>
            <person name="Danchin A."/>
            <person name="Diard M."/>
            <person name="Dossat C."/>
            <person name="Karoui M.E."/>
            <person name="Frapy E."/>
            <person name="Garry L."/>
            <person name="Ghigo J.M."/>
            <person name="Gilles A.M."/>
            <person name="Johnson J."/>
            <person name="Le Bouguenec C."/>
            <person name="Lescat M."/>
            <person name="Mangenot S."/>
            <person name="Martinez-Jehanne V."/>
            <person name="Matic I."/>
            <person name="Nassif X."/>
            <person name="Oztas S."/>
            <person name="Petit M.A."/>
            <person name="Pichon C."/>
            <person name="Rouy Z."/>
            <person name="Ruf C.S."/>
            <person name="Schneider D."/>
            <person name="Tourret J."/>
            <person name="Vacherie B."/>
            <person name="Vallenet D."/>
            <person name="Medigue C."/>
            <person name="Rocha E.P.C."/>
            <person name="Denamur E."/>
        </authorList>
    </citation>
    <scope>NUCLEOTIDE SEQUENCE [LARGE SCALE GENOMIC DNA]</scope>
    <source>
        <strain>ED1a</strain>
    </source>
</reference>
<gene>
    <name evidence="1" type="primary">yeaH</name>
    <name type="ordered locus">ECED1_1989</name>
</gene>
<protein>
    <recommendedName>
        <fullName evidence="1">UPF0229 protein YeaH</fullName>
    </recommendedName>
</protein>
<proteinExistence type="inferred from homology"/>
<name>YEAH_ECO81</name>
<organism>
    <name type="scientific">Escherichia coli O81 (strain ED1a)</name>
    <dbReference type="NCBI Taxonomy" id="585397"/>
    <lineage>
        <taxon>Bacteria</taxon>
        <taxon>Pseudomonadati</taxon>
        <taxon>Pseudomonadota</taxon>
        <taxon>Gammaproteobacteria</taxon>
        <taxon>Enterobacterales</taxon>
        <taxon>Enterobacteriaceae</taxon>
        <taxon>Escherichia</taxon>
    </lineage>
</organism>
<feature type="chain" id="PRO_1000164981" description="UPF0229 protein YeaH">
    <location>
        <begin position="1"/>
        <end position="427"/>
    </location>
</feature>
<feature type="region of interest" description="Disordered" evidence="2">
    <location>
        <begin position="79"/>
        <end position="110"/>
    </location>
</feature>
<feature type="compositionally biased region" description="Basic and acidic residues" evidence="2">
    <location>
        <begin position="79"/>
        <end position="90"/>
    </location>
</feature>
<feature type="compositionally biased region" description="Gly residues" evidence="2">
    <location>
        <begin position="92"/>
        <end position="102"/>
    </location>
</feature>
<accession>B7MVR5</accession>
<dbReference type="EMBL" id="CU928162">
    <property type="protein sequence ID" value="CAR08181.2"/>
    <property type="molecule type" value="Genomic_DNA"/>
</dbReference>
<dbReference type="RefSeq" id="WP_000219684.1">
    <property type="nucleotide sequence ID" value="NC_011745.1"/>
</dbReference>
<dbReference type="SMR" id="B7MVR5"/>
<dbReference type="KEGG" id="ecq:ECED1_1989"/>
<dbReference type="HOGENOM" id="CLU_049702_0_0_6"/>
<dbReference type="Proteomes" id="UP000000748">
    <property type="component" value="Chromosome"/>
</dbReference>
<dbReference type="HAMAP" id="MF_01232">
    <property type="entry name" value="UPF0229"/>
    <property type="match status" value="1"/>
</dbReference>
<dbReference type="InterPro" id="IPR006698">
    <property type="entry name" value="UPF0229"/>
</dbReference>
<dbReference type="NCBIfam" id="NF003707">
    <property type="entry name" value="PRK05325.1-2"/>
    <property type="match status" value="1"/>
</dbReference>
<dbReference type="NCBIfam" id="NF003708">
    <property type="entry name" value="PRK05325.1-3"/>
    <property type="match status" value="1"/>
</dbReference>
<dbReference type="PANTHER" id="PTHR30510">
    <property type="entry name" value="UPF0229 PROTEIN YEAH"/>
    <property type="match status" value="1"/>
</dbReference>
<dbReference type="PANTHER" id="PTHR30510:SF2">
    <property type="entry name" value="UPF0229 PROTEIN YEAH"/>
    <property type="match status" value="1"/>
</dbReference>
<dbReference type="Pfam" id="PF04285">
    <property type="entry name" value="DUF444"/>
    <property type="match status" value="1"/>
</dbReference>